<sequence>MQKLAELYRGKAKTVYTTENPDLLVLEFRNDTSALDGQRIEQFDRKGMVNNKFNHFIMTKLEEAGIPTQMERLLSDTEVLVKKLEMIPVECVIRNRAAGSLVKRLGIEEGLSLNPPLFDLFLKNDAMHDPMVNESYCKTFGWATEAQLARMKELSYLANDVLSKLFDDAGLILVDFKLEFGLFNGEVVLGDEFSPDGSRLWDKKTLNKMDKDRYRQSLGGLIEAYEEVAHRIGVKLD</sequence>
<dbReference type="EC" id="6.3.2.6" evidence="1"/>
<dbReference type="EMBL" id="AL590842">
    <property type="protein sequence ID" value="CAL21661.1"/>
    <property type="molecule type" value="Genomic_DNA"/>
</dbReference>
<dbReference type="EMBL" id="AE009952">
    <property type="protein sequence ID" value="AAM84993.1"/>
    <property type="molecule type" value="Genomic_DNA"/>
</dbReference>
<dbReference type="EMBL" id="AE017042">
    <property type="protein sequence ID" value="AAS62871.1"/>
    <property type="molecule type" value="Genomic_DNA"/>
</dbReference>
<dbReference type="PIR" id="AB0372">
    <property type="entry name" value="AB0372"/>
</dbReference>
<dbReference type="RefSeq" id="WP_002208555.1">
    <property type="nucleotide sequence ID" value="NZ_WUCM01000010.1"/>
</dbReference>
<dbReference type="RefSeq" id="YP_002347979.1">
    <property type="nucleotide sequence ID" value="NC_003143.1"/>
</dbReference>
<dbReference type="SMR" id="Q8ZCD2"/>
<dbReference type="STRING" id="214092.YPO3059"/>
<dbReference type="PaxDb" id="214092-YPO3059"/>
<dbReference type="DNASU" id="1146368"/>
<dbReference type="EnsemblBacteria" id="AAS62871">
    <property type="protein sequence ID" value="AAS62871"/>
    <property type="gene ID" value="YP_2681"/>
</dbReference>
<dbReference type="GeneID" id="57975643"/>
<dbReference type="KEGG" id="ype:YPO3059"/>
<dbReference type="KEGG" id="ypk:y1421"/>
<dbReference type="KEGG" id="ypm:YP_2681"/>
<dbReference type="PATRIC" id="fig|214092.21.peg.3515"/>
<dbReference type="eggNOG" id="COG0152">
    <property type="taxonomic scope" value="Bacteria"/>
</dbReference>
<dbReference type="HOGENOM" id="CLU_061495_2_0_6"/>
<dbReference type="OMA" id="EFCYKND"/>
<dbReference type="OrthoDB" id="9801549at2"/>
<dbReference type="UniPathway" id="UPA00074">
    <property type="reaction ID" value="UER00131"/>
</dbReference>
<dbReference type="Proteomes" id="UP000000815">
    <property type="component" value="Chromosome"/>
</dbReference>
<dbReference type="Proteomes" id="UP000001019">
    <property type="component" value="Chromosome"/>
</dbReference>
<dbReference type="Proteomes" id="UP000002490">
    <property type="component" value="Chromosome"/>
</dbReference>
<dbReference type="GO" id="GO:0005829">
    <property type="term" value="C:cytosol"/>
    <property type="evidence" value="ECO:0000318"/>
    <property type="project" value="GO_Central"/>
</dbReference>
<dbReference type="GO" id="GO:0005524">
    <property type="term" value="F:ATP binding"/>
    <property type="evidence" value="ECO:0007669"/>
    <property type="project" value="UniProtKB-KW"/>
</dbReference>
<dbReference type="GO" id="GO:0004639">
    <property type="term" value="F:phosphoribosylaminoimidazolesuccinocarboxamide synthase activity"/>
    <property type="evidence" value="ECO:0000318"/>
    <property type="project" value="GO_Central"/>
</dbReference>
<dbReference type="GO" id="GO:0006189">
    <property type="term" value="P:'de novo' IMP biosynthetic process"/>
    <property type="evidence" value="ECO:0007669"/>
    <property type="project" value="UniProtKB-UniRule"/>
</dbReference>
<dbReference type="GO" id="GO:0009236">
    <property type="term" value="P:cobalamin biosynthetic process"/>
    <property type="evidence" value="ECO:0007669"/>
    <property type="project" value="InterPro"/>
</dbReference>
<dbReference type="CDD" id="cd01415">
    <property type="entry name" value="SAICAR_synt_PurC"/>
    <property type="match status" value="1"/>
</dbReference>
<dbReference type="FunFam" id="3.30.200.20:FF:000086">
    <property type="entry name" value="Phosphoribosylaminoimidazole-succinocarboxamide synthase"/>
    <property type="match status" value="1"/>
</dbReference>
<dbReference type="FunFam" id="3.30.470.20:FF:000006">
    <property type="entry name" value="Phosphoribosylaminoimidazole-succinocarboxamide synthase"/>
    <property type="match status" value="1"/>
</dbReference>
<dbReference type="Gene3D" id="3.30.470.20">
    <property type="entry name" value="ATP-grasp fold, B domain"/>
    <property type="match status" value="1"/>
</dbReference>
<dbReference type="Gene3D" id="3.30.200.20">
    <property type="entry name" value="Phosphorylase Kinase, domain 1"/>
    <property type="match status" value="1"/>
</dbReference>
<dbReference type="HAMAP" id="MF_00137">
    <property type="entry name" value="SAICAR_synth"/>
    <property type="match status" value="1"/>
</dbReference>
<dbReference type="InterPro" id="IPR028923">
    <property type="entry name" value="SAICAR_synt/ADE2_N"/>
</dbReference>
<dbReference type="InterPro" id="IPR033934">
    <property type="entry name" value="SAICAR_synt_PurC"/>
</dbReference>
<dbReference type="InterPro" id="IPR001636">
    <property type="entry name" value="SAICAR_synth"/>
</dbReference>
<dbReference type="InterPro" id="IPR050089">
    <property type="entry name" value="SAICAR_synthetase"/>
</dbReference>
<dbReference type="InterPro" id="IPR018236">
    <property type="entry name" value="SAICAR_synthetase_CS"/>
</dbReference>
<dbReference type="NCBIfam" id="TIGR00081">
    <property type="entry name" value="purC"/>
    <property type="match status" value="1"/>
</dbReference>
<dbReference type="PANTHER" id="PTHR43599">
    <property type="entry name" value="MULTIFUNCTIONAL PROTEIN ADE2"/>
    <property type="match status" value="1"/>
</dbReference>
<dbReference type="PANTHER" id="PTHR43599:SF3">
    <property type="entry name" value="SI:DKEY-6E2.2"/>
    <property type="match status" value="1"/>
</dbReference>
<dbReference type="Pfam" id="PF01259">
    <property type="entry name" value="SAICAR_synt"/>
    <property type="match status" value="1"/>
</dbReference>
<dbReference type="SUPFAM" id="SSF56104">
    <property type="entry name" value="SAICAR synthase-like"/>
    <property type="match status" value="1"/>
</dbReference>
<dbReference type="PROSITE" id="PS01057">
    <property type="entry name" value="SAICAR_SYNTHETASE_1"/>
    <property type="match status" value="1"/>
</dbReference>
<dbReference type="PROSITE" id="PS01058">
    <property type="entry name" value="SAICAR_SYNTHETASE_2"/>
    <property type="match status" value="1"/>
</dbReference>
<name>PUR7_YERPE</name>
<reference key="1">
    <citation type="journal article" date="2001" name="Nature">
        <title>Genome sequence of Yersinia pestis, the causative agent of plague.</title>
        <authorList>
            <person name="Parkhill J."/>
            <person name="Wren B.W."/>
            <person name="Thomson N.R."/>
            <person name="Titball R.W."/>
            <person name="Holden M.T.G."/>
            <person name="Prentice M.B."/>
            <person name="Sebaihia M."/>
            <person name="James K.D."/>
            <person name="Churcher C.M."/>
            <person name="Mungall K.L."/>
            <person name="Baker S."/>
            <person name="Basham D."/>
            <person name="Bentley S.D."/>
            <person name="Brooks K."/>
            <person name="Cerdeno-Tarraga A.-M."/>
            <person name="Chillingworth T."/>
            <person name="Cronin A."/>
            <person name="Davies R.M."/>
            <person name="Davis P."/>
            <person name="Dougan G."/>
            <person name="Feltwell T."/>
            <person name="Hamlin N."/>
            <person name="Holroyd S."/>
            <person name="Jagels K."/>
            <person name="Karlyshev A.V."/>
            <person name="Leather S."/>
            <person name="Moule S."/>
            <person name="Oyston P.C.F."/>
            <person name="Quail M.A."/>
            <person name="Rutherford K.M."/>
            <person name="Simmonds M."/>
            <person name="Skelton J."/>
            <person name="Stevens K."/>
            <person name="Whitehead S."/>
            <person name="Barrell B.G."/>
        </authorList>
    </citation>
    <scope>NUCLEOTIDE SEQUENCE [LARGE SCALE GENOMIC DNA]</scope>
    <source>
        <strain>CO-92 / Biovar Orientalis</strain>
    </source>
</reference>
<reference key="2">
    <citation type="journal article" date="2002" name="J. Bacteriol.">
        <title>Genome sequence of Yersinia pestis KIM.</title>
        <authorList>
            <person name="Deng W."/>
            <person name="Burland V."/>
            <person name="Plunkett G. III"/>
            <person name="Boutin A."/>
            <person name="Mayhew G.F."/>
            <person name="Liss P."/>
            <person name="Perna N.T."/>
            <person name="Rose D.J."/>
            <person name="Mau B."/>
            <person name="Zhou S."/>
            <person name="Schwartz D.C."/>
            <person name="Fetherston J.D."/>
            <person name="Lindler L.E."/>
            <person name="Brubaker R.R."/>
            <person name="Plano G.V."/>
            <person name="Straley S.C."/>
            <person name="McDonough K.A."/>
            <person name="Nilles M.L."/>
            <person name="Matson J.S."/>
            <person name="Blattner F.R."/>
            <person name="Perry R.D."/>
        </authorList>
    </citation>
    <scope>NUCLEOTIDE SEQUENCE [LARGE SCALE GENOMIC DNA]</scope>
    <source>
        <strain>KIM10+ / Biovar Mediaevalis</strain>
    </source>
</reference>
<reference key="3">
    <citation type="journal article" date="2004" name="DNA Res.">
        <title>Complete genome sequence of Yersinia pestis strain 91001, an isolate avirulent to humans.</title>
        <authorList>
            <person name="Song Y."/>
            <person name="Tong Z."/>
            <person name="Wang J."/>
            <person name="Wang L."/>
            <person name="Guo Z."/>
            <person name="Han Y."/>
            <person name="Zhang J."/>
            <person name="Pei D."/>
            <person name="Zhou D."/>
            <person name="Qin H."/>
            <person name="Pang X."/>
            <person name="Han Y."/>
            <person name="Zhai J."/>
            <person name="Li M."/>
            <person name="Cui B."/>
            <person name="Qi Z."/>
            <person name="Jin L."/>
            <person name="Dai R."/>
            <person name="Chen F."/>
            <person name="Li S."/>
            <person name="Ye C."/>
            <person name="Du Z."/>
            <person name="Lin W."/>
            <person name="Wang J."/>
            <person name="Yu J."/>
            <person name="Yang H."/>
            <person name="Wang J."/>
            <person name="Huang P."/>
            <person name="Yang R."/>
        </authorList>
    </citation>
    <scope>NUCLEOTIDE SEQUENCE [LARGE SCALE GENOMIC DNA]</scope>
    <source>
        <strain>91001 / Biovar Mediaevalis</strain>
    </source>
</reference>
<accession>Q8ZCD2</accession>
<accession>Q0WCK9</accession>
<feature type="chain" id="PRO_0000100905" description="Phosphoribosylaminoimidazole-succinocarboxamide synthase">
    <location>
        <begin position="1"/>
        <end position="237"/>
    </location>
</feature>
<evidence type="ECO:0000255" key="1">
    <source>
        <dbReference type="HAMAP-Rule" id="MF_00137"/>
    </source>
</evidence>
<keyword id="KW-0067">ATP-binding</keyword>
<keyword id="KW-0436">Ligase</keyword>
<keyword id="KW-0547">Nucleotide-binding</keyword>
<keyword id="KW-0658">Purine biosynthesis</keyword>
<keyword id="KW-1185">Reference proteome</keyword>
<gene>
    <name evidence="1" type="primary">purC</name>
    <name type="ordered locus">YPO3059</name>
    <name type="ordered locus">y1421</name>
    <name type="ordered locus">YP_2681</name>
</gene>
<comment type="catalytic activity">
    <reaction evidence="1">
        <text>5-amino-1-(5-phospho-D-ribosyl)imidazole-4-carboxylate + L-aspartate + ATP = (2S)-2-[5-amino-1-(5-phospho-beta-D-ribosyl)imidazole-4-carboxamido]succinate + ADP + phosphate + 2 H(+)</text>
        <dbReference type="Rhea" id="RHEA:22628"/>
        <dbReference type="ChEBI" id="CHEBI:15378"/>
        <dbReference type="ChEBI" id="CHEBI:29991"/>
        <dbReference type="ChEBI" id="CHEBI:30616"/>
        <dbReference type="ChEBI" id="CHEBI:43474"/>
        <dbReference type="ChEBI" id="CHEBI:58443"/>
        <dbReference type="ChEBI" id="CHEBI:77657"/>
        <dbReference type="ChEBI" id="CHEBI:456216"/>
        <dbReference type="EC" id="6.3.2.6"/>
    </reaction>
</comment>
<comment type="pathway">
    <text evidence="1">Purine metabolism; IMP biosynthesis via de novo pathway; 5-amino-1-(5-phospho-D-ribosyl)imidazole-4-carboxamide from 5-amino-1-(5-phospho-D-ribosyl)imidazole-4-carboxylate: step 1/2.</text>
</comment>
<comment type="similarity">
    <text evidence="1">Belongs to the SAICAR synthetase family.</text>
</comment>
<proteinExistence type="inferred from homology"/>
<protein>
    <recommendedName>
        <fullName evidence="1">Phosphoribosylaminoimidazole-succinocarboxamide synthase</fullName>
        <ecNumber evidence="1">6.3.2.6</ecNumber>
    </recommendedName>
    <alternativeName>
        <fullName evidence="1">SAICAR synthetase</fullName>
    </alternativeName>
</protein>
<organism>
    <name type="scientific">Yersinia pestis</name>
    <dbReference type="NCBI Taxonomy" id="632"/>
    <lineage>
        <taxon>Bacteria</taxon>
        <taxon>Pseudomonadati</taxon>
        <taxon>Pseudomonadota</taxon>
        <taxon>Gammaproteobacteria</taxon>
        <taxon>Enterobacterales</taxon>
        <taxon>Yersiniaceae</taxon>
        <taxon>Yersinia</taxon>
    </lineage>
</organism>